<gene>
    <name type="primary">LALBA</name>
</gene>
<dbReference type="PIR" id="S29647">
    <property type="entry name" value="S29647"/>
</dbReference>
<dbReference type="STRING" id="9258.ENSOANP00000020722"/>
<dbReference type="GlyCosmos" id="P30805">
    <property type="glycosylation" value="1 site, No reported glycans"/>
</dbReference>
<dbReference type="InParanoid" id="P30805"/>
<dbReference type="Proteomes" id="UP000002279">
    <property type="component" value="Unplaced"/>
</dbReference>
<dbReference type="GO" id="GO:0005576">
    <property type="term" value="C:extracellular region"/>
    <property type="evidence" value="ECO:0007669"/>
    <property type="project" value="UniProtKB-SubCell"/>
</dbReference>
<dbReference type="GO" id="GO:0003796">
    <property type="term" value="F:lysozyme activity"/>
    <property type="evidence" value="ECO:0000318"/>
    <property type="project" value="GO_Central"/>
</dbReference>
<dbReference type="GO" id="GO:0046872">
    <property type="term" value="F:metal ion binding"/>
    <property type="evidence" value="ECO:0007669"/>
    <property type="project" value="UniProtKB-KW"/>
</dbReference>
<dbReference type="GO" id="GO:0050829">
    <property type="term" value="P:defense response to Gram-negative bacterium"/>
    <property type="evidence" value="ECO:0000318"/>
    <property type="project" value="GO_Central"/>
</dbReference>
<dbReference type="GO" id="GO:0050830">
    <property type="term" value="P:defense response to Gram-positive bacterium"/>
    <property type="evidence" value="ECO:0000318"/>
    <property type="project" value="GO_Central"/>
</dbReference>
<dbReference type="GO" id="GO:0005989">
    <property type="term" value="P:lactose biosynthetic process"/>
    <property type="evidence" value="ECO:0007669"/>
    <property type="project" value="UniProtKB-KW"/>
</dbReference>
<dbReference type="CDD" id="cd16898">
    <property type="entry name" value="LYZ_LA"/>
    <property type="match status" value="1"/>
</dbReference>
<dbReference type="FunFam" id="1.10.530.10:FF:000001">
    <property type="entry name" value="Lysozyme C"/>
    <property type="match status" value="1"/>
</dbReference>
<dbReference type="Gene3D" id="1.10.530.10">
    <property type="match status" value="1"/>
</dbReference>
<dbReference type="InterPro" id="IPR001916">
    <property type="entry name" value="Glyco_hydro_22"/>
</dbReference>
<dbReference type="InterPro" id="IPR019799">
    <property type="entry name" value="Glyco_hydro_22_CS"/>
</dbReference>
<dbReference type="InterPro" id="IPR000974">
    <property type="entry name" value="Glyco_hydro_22_lys"/>
</dbReference>
<dbReference type="InterPro" id="IPR023346">
    <property type="entry name" value="Lysozyme-like_dom_sf"/>
</dbReference>
<dbReference type="PANTHER" id="PTHR11407:SF32">
    <property type="entry name" value="ALPHA-LACTALBUMIN"/>
    <property type="match status" value="1"/>
</dbReference>
<dbReference type="PANTHER" id="PTHR11407">
    <property type="entry name" value="LYSOZYME C"/>
    <property type="match status" value="1"/>
</dbReference>
<dbReference type="Pfam" id="PF00062">
    <property type="entry name" value="Lys"/>
    <property type="match status" value="1"/>
</dbReference>
<dbReference type="PRINTS" id="PR00137">
    <property type="entry name" value="LYSOZYME"/>
</dbReference>
<dbReference type="PRINTS" id="PR00135">
    <property type="entry name" value="LYZLACT"/>
</dbReference>
<dbReference type="SMART" id="SM00263">
    <property type="entry name" value="LYZ1"/>
    <property type="match status" value="1"/>
</dbReference>
<dbReference type="SUPFAM" id="SSF53955">
    <property type="entry name" value="Lysozyme-like"/>
    <property type="match status" value="1"/>
</dbReference>
<dbReference type="PROSITE" id="PS00128">
    <property type="entry name" value="GLYCOSYL_HYDROL_F22_1"/>
    <property type="match status" value="1"/>
</dbReference>
<dbReference type="PROSITE" id="PS51348">
    <property type="entry name" value="GLYCOSYL_HYDROL_F22_2"/>
    <property type="match status" value="1"/>
</dbReference>
<comment type="function">
    <text>Regulatory subunit of lactose synthase, changes the substrate specificity of galactosyltransferase in the mammary gland making glucose a good acceptor substrate for this enzyme. This enables LS to synthesize lactose, the major carbohydrate component of milk. In other tissues, galactosyltransferase transfers galactose onto the N-acetylglucosamine of the oligosaccharide chains in glycoproteins.</text>
</comment>
<comment type="subunit">
    <text>Lactose synthase (LS) is a heterodimer of a catalytic component, beta1,4-galactosyltransferase (beta4Gal-T1) and a regulatory component, alpha-lactalbumin (LA).</text>
</comment>
<comment type="subcellular location">
    <subcellularLocation>
        <location>Secreted</location>
    </subcellularLocation>
</comment>
<comment type="tissue specificity">
    <text>Mammary gland specific. Secreted in milk.</text>
</comment>
<comment type="similarity">
    <text evidence="2">Belongs to the glycosyl hydrolase 22 family.</text>
</comment>
<keyword id="KW-0106">Calcium</keyword>
<keyword id="KW-0903">Direct protein sequencing</keyword>
<keyword id="KW-1015">Disulfide bond</keyword>
<keyword id="KW-0325">Glycoprotein</keyword>
<keyword id="KW-0422">Lactose biosynthesis</keyword>
<keyword id="KW-0479">Metal-binding</keyword>
<keyword id="KW-0494">Milk protein</keyword>
<keyword id="KW-1185">Reference proteome</keyword>
<keyword id="KW-0964">Secreted</keyword>
<sequence length="126" mass="14337">RIFQICELSRVLKENGLGGFHGVSLEEWLCVIFHESGYDSQALNYYNGSSSHGLFQINQPYWCDDXDSESTEPSVNACQIPCSKLLDDDILDDIECAKKIVKEPKGITAWEAWQPFCNSDLDQWKC</sequence>
<feature type="chain" id="PRO_0000208840" description="Alpha-lactalbumin">
    <location>
        <begin position="1"/>
        <end position="126"/>
    </location>
</feature>
<feature type="domain" description="C-type lysozyme" evidence="2">
    <location>
        <begin position="1"/>
        <end position="126"/>
    </location>
</feature>
<feature type="binding site" evidence="1">
    <location>
        <position position="84"/>
    </location>
    <ligand>
        <name>Ca(2+)</name>
        <dbReference type="ChEBI" id="CHEBI:29108"/>
    </ligand>
</feature>
<feature type="binding site" evidence="1">
    <location>
        <position position="87"/>
    </location>
    <ligand>
        <name>Ca(2+)</name>
        <dbReference type="ChEBI" id="CHEBI:29108"/>
    </ligand>
</feature>
<feature type="binding site" evidence="1">
    <location>
        <position position="89"/>
    </location>
    <ligand>
        <name>Ca(2+)</name>
        <dbReference type="ChEBI" id="CHEBI:29108"/>
    </ligand>
</feature>
<feature type="binding site" evidence="1">
    <location>
        <position position="92"/>
    </location>
    <ligand>
        <name>Ca(2+)</name>
        <dbReference type="ChEBI" id="CHEBI:29108"/>
    </ligand>
</feature>
<feature type="binding site" evidence="1">
    <location>
        <position position="93"/>
    </location>
    <ligand>
        <name>Ca(2+)</name>
        <dbReference type="ChEBI" id="CHEBI:29108"/>
    </ligand>
</feature>
<feature type="glycosylation site" description="N-linked (GlcNAc...) asparagine">
    <location>
        <position position="47"/>
    </location>
</feature>
<feature type="disulfide bond" evidence="2">
    <location>
        <begin position="6"/>
        <end position="126"/>
    </location>
</feature>
<feature type="disulfide bond" evidence="2">
    <location>
        <begin position="30"/>
        <end position="117"/>
    </location>
</feature>
<feature type="disulfide bond" evidence="2">
    <location>
        <begin position="63"/>
        <end position="82"/>
    </location>
</feature>
<feature type="disulfide bond" evidence="2">
    <location>
        <begin position="78"/>
        <end position="96"/>
    </location>
</feature>
<feature type="unsure residue" description="D or A">
    <location>
        <position position="65"/>
    </location>
</feature>
<feature type="unsure residue" description="D or E">
    <location>
        <position position="67"/>
    </location>
</feature>
<proteinExistence type="evidence at protein level"/>
<accession>P30805</accession>
<reference key="1">
    <citation type="journal article" date="1993" name="Biochim. Biophys. Acta">
        <title>Isolation, partial characterisation, and amino acid sequence of alpha-lactalbumin from platypus (Ornithorhynchus anatinus) milk.</title>
        <authorList>
            <person name="Shaw D.C."/>
            <person name="Messer M."/>
            <person name="Scrivener A.M."/>
            <person name="Nicholas K.R."/>
            <person name="Griffiths M."/>
        </authorList>
    </citation>
    <scope>PROTEIN SEQUENCE</scope>
    <source>
        <tissue>Milk</tissue>
    </source>
</reference>
<protein>
    <recommendedName>
        <fullName>Alpha-lactalbumin</fullName>
    </recommendedName>
    <alternativeName>
        <fullName>Lactose synthase B protein</fullName>
    </alternativeName>
</protein>
<organism>
    <name type="scientific">Ornithorhynchus anatinus</name>
    <name type="common">Duckbill platypus</name>
    <dbReference type="NCBI Taxonomy" id="9258"/>
    <lineage>
        <taxon>Eukaryota</taxon>
        <taxon>Metazoa</taxon>
        <taxon>Chordata</taxon>
        <taxon>Craniata</taxon>
        <taxon>Vertebrata</taxon>
        <taxon>Euteleostomi</taxon>
        <taxon>Mammalia</taxon>
        <taxon>Monotremata</taxon>
        <taxon>Ornithorhynchidae</taxon>
        <taxon>Ornithorhynchus</taxon>
    </lineage>
</organism>
<name>LALBA_ORNAN</name>
<evidence type="ECO:0000250" key="1">
    <source>
        <dbReference type="UniProtKB" id="P00711"/>
    </source>
</evidence>
<evidence type="ECO:0000255" key="2">
    <source>
        <dbReference type="PROSITE-ProRule" id="PRU00680"/>
    </source>
</evidence>